<name>ZNUC_PSEE4</name>
<feature type="chain" id="PRO_0000281526" description="Zinc import ATP-binding protein ZnuC">
    <location>
        <begin position="1"/>
        <end position="257"/>
    </location>
</feature>
<feature type="domain" description="ABC transporter" evidence="1">
    <location>
        <begin position="6"/>
        <end position="221"/>
    </location>
</feature>
<feature type="binding site" evidence="1">
    <location>
        <begin position="38"/>
        <end position="45"/>
    </location>
    <ligand>
        <name>ATP</name>
        <dbReference type="ChEBI" id="CHEBI:30616"/>
    </ligand>
</feature>
<gene>
    <name evidence="1" type="primary">znuC</name>
    <name type="ordered locus">PSEEN0071</name>
</gene>
<proteinExistence type="inferred from homology"/>
<comment type="function">
    <text evidence="1">Part of the ABC transporter complex ZnuABC involved in zinc import. Responsible for energy coupling to the transport system.</text>
</comment>
<comment type="catalytic activity">
    <reaction evidence="1">
        <text>Zn(2+)(out) + ATP(in) + H2O(in) = Zn(2+)(in) + ADP(in) + phosphate(in) + H(+)(in)</text>
        <dbReference type="Rhea" id="RHEA:29795"/>
        <dbReference type="ChEBI" id="CHEBI:15377"/>
        <dbReference type="ChEBI" id="CHEBI:15378"/>
        <dbReference type="ChEBI" id="CHEBI:29105"/>
        <dbReference type="ChEBI" id="CHEBI:30616"/>
        <dbReference type="ChEBI" id="CHEBI:43474"/>
        <dbReference type="ChEBI" id="CHEBI:456216"/>
        <dbReference type="EC" id="7.2.2.20"/>
    </reaction>
</comment>
<comment type="subunit">
    <text evidence="1">The complex is composed of two ATP-binding proteins (ZnuC), two transmembrane proteins (ZnuB) and a solute-binding protein (ZnuA).</text>
</comment>
<comment type="subcellular location">
    <subcellularLocation>
        <location evidence="1">Cell inner membrane</location>
        <topology evidence="1">Peripheral membrane protein</topology>
    </subcellularLocation>
</comment>
<comment type="similarity">
    <text evidence="1">Belongs to the ABC transporter superfamily. Zinc importer (TC 3.A.1.15.5) family.</text>
</comment>
<sequence length="257" mass="27811">MSDALIRLEQVGVSFAGEAVLDSIDLAVAPGQIVTLIGPNGAGKTTLVRAVLGLLKPHRGKVWRKPKLRIGYMPQKIQVDATLPLSVLRFLRLVPGVDRAAALSALQEVGAEQVIDSPIQTISGGEMQRVLLARALLREPELLVLDEPVQGVDVVGQTELYNLITRLRDRHGCGVLMVSHDLHLVMSATDQVVCLNRHVCCSGHPEQVSNDPAFVELFGQNAKSLAVYHHHHDHSHDLHGSVIAPGAHVHGEHCKHG</sequence>
<organism>
    <name type="scientific">Pseudomonas entomophila (strain L48)</name>
    <dbReference type="NCBI Taxonomy" id="384676"/>
    <lineage>
        <taxon>Bacteria</taxon>
        <taxon>Pseudomonadati</taxon>
        <taxon>Pseudomonadota</taxon>
        <taxon>Gammaproteobacteria</taxon>
        <taxon>Pseudomonadales</taxon>
        <taxon>Pseudomonadaceae</taxon>
        <taxon>Pseudomonas</taxon>
    </lineage>
</organism>
<accession>Q1IGY7</accession>
<dbReference type="EC" id="7.2.2.20" evidence="1"/>
<dbReference type="EMBL" id="CT573326">
    <property type="protein sequence ID" value="CAK13065.1"/>
    <property type="molecule type" value="Genomic_DNA"/>
</dbReference>
<dbReference type="RefSeq" id="WP_011531526.1">
    <property type="nucleotide sequence ID" value="NC_008027.1"/>
</dbReference>
<dbReference type="SMR" id="Q1IGY7"/>
<dbReference type="STRING" id="384676.PSEEN0071"/>
<dbReference type="GeneID" id="32803439"/>
<dbReference type="KEGG" id="pen:PSEEN0071"/>
<dbReference type="eggNOG" id="COG1121">
    <property type="taxonomic scope" value="Bacteria"/>
</dbReference>
<dbReference type="HOGENOM" id="CLU_000604_1_11_6"/>
<dbReference type="OrthoDB" id="9780942at2"/>
<dbReference type="Proteomes" id="UP000000658">
    <property type="component" value="Chromosome"/>
</dbReference>
<dbReference type="GO" id="GO:0005886">
    <property type="term" value="C:plasma membrane"/>
    <property type="evidence" value="ECO:0007669"/>
    <property type="project" value="UniProtKB-SubCell"/>
</dbReference>
<dbReference type="GO" id="GO:0015633">
    <property type="term" value="F:ABC-type zinc transporter activity"/>
    <property type="evidence" value="ECO:0007669"/>
    <property type="project" value="UniProtKB-EC"/>
</dbReference>
<dbReference type="GO" id="GO:0005524">
    <property type="term" value="F:ATP binding"/>
    <property type="evidence" value="ECO:0007669"/>
    <property type="project" value="UniProtKB-KW"/>
</dbReference>
<dbReference type="GO" id="GO:0016887">
    <property type="term" value="F:ATP hydrolysis activity"/>
    <property type="evidence" value="ECO:0007669"/>
    <property type="project" value="InterPro"/>
</dbReference>
<dbReference type="GO" id="GO:0010043">
    <property type="term" value="P:response to zinc ion"/>
    <property type="evidence" value="ECO:0007669"/>
    <property type="project" value="TreeGrafter"/>
</dbReference>
<dbReference type="CDD" id="cd03235">
    <property type="entry name" value="ABC_Metallic_Cations"/>
    <property type="match status" value="1"/>
</dbReference>
<dbReference type="FunFam" id="3.40.50.300:FF:000392">
    <property type="entry name" value="Zinc import ATP-binding protein ZnuC"/>
    <property type="match status" value="1"/>
</dbReference>
<dbReference type="Gene3D" id="3.40.50.300">
    <property type="entry name" value="P-loop containing nucleotide triphosphate hydrolases"/>
    <property type="match status" value="1"/>
</dbReference>
<dbReference type="InterPro" id="IPR003593">
    <property type="entry name" value="AAA+_ATPase"/>
</dbReference>
<dbReference type="InterPro" id="IPR003439">
    <property type="entry name" value="ABC_transporter-like_ATP-bd"/>
</dbReference>
<dbReference type="InterPro" id="IPR017871">
    <property type="entry name" value="ABC_transporter-like_CS"/>
</dbReference>
<dbReference type="InterPro" id="IPR050153">
    <property type="entry name" value="Metal_Ion_Import_ABC"/>
</dbReference>
<dbReference type="InterPro" id="IPR027417">
    <property type="entry name" value="P-loop_NTPase"/>
</dbReference>
<dbReference type="NCBIfam" id="NF007090">
    <property type="entry name" value="PRK09544.1"/>
    <property type="match status" value="1"/>
</dbReference>
<dbReference type="PANTHER" id="PTHR42734">
    <property type="entry name" value="METAL TRANSPORT SYSTEM ATP-BINDING PROTEIN TM_0124-RELATED"/>
    <property type="match status" value="1"/>
</dbReference>
<dbReference type="PANTHER" id="PTHR42734:SF9">
    <property type="entry name" value="ZINC IMPORT ATP-BINDING PROTEIN ZNUC"/>
    <property type="match status" value="1"/>
</dbReference>
<dbReference type="Pfam" id="PF00005">
    <property type="entry name" value="ABC_tran"/>
    <property type="match status" value="1"/>
</dbReference>
<dbReference type="SMART" id="SM00382">
    <property type="entry name" value="AAA"/>
    <property type="match status" value="1"/>
</dbReference>
<dbReference type="SUPFAM" id="SSF52540">
    <property type="entry name" value="P-loop containing nucleoside triphosphate hydrolases"/>
    <property type="match status" value="1"/>
</dbReference>
<dbReference type="PROSITE" id="PS00211">
    <property type="entry name" value="ABC_TRANSPORTER_1"/>
    <property type="match status" value="1"/>
</dbReference>
<dbReference type="PROSITE" id="PS50893">
    <property type="entry name" value="ABC_TRANSPORTER_2"/>
    <property type="match status" value="1"/>
</dbReference>
<dbReference type="PROSITE" id="PS51298">
    <property type="entry name" value="ZNUC"/>
    <property type="match status" value="1"/>
</dbReference>
<evidence type="ECO:0000255" key="1">
    <source>
        <dbReference type="HAMAP-Rule" id="MF_01725"/>
    </source>
</evidence>
<protein>
    <recommendedName>
        <fullName evidence="1">Zinc import ATP-binding protein ZnuC</fullName>
        <ecNumber evidence="1">7.2.2.20</ecNumber>
    </recommendedName>
</protein>
<keyword id="KW-0067">ATP-binding</keyword>
<keyword id="KW-0997">Cell inner membrane</keyword>
<keyword id="KW-1003">Cell membrane</keyword>
<keyword id="KW-0406">Ion transport</keyword>
<keyword id="KW-0472">Membrane</keyword>
<keyword id="KW-0547">Nucleotide-binding</keyword>
<keyword id="KW-1278">Translocase</keyword>
<keyword id="KW-0813">Transport</keyword>
<keyword id="KW-0862">Zinc</keyword>
<keyword id="KW-0864">Zinc transport</keyword>
<reference key="1">
    <citation type="journal article" date="2006" name="Nat. Biotechnol.">
        <title>Complete genome sequence of the entomopathogenic and metabolically versatile soil bacterium Pseudomonas entomophila.</title>
        <authorList>
            <person name="Vodovar N."/>
            <person name="Vallenet D."/>
            <person name="Cruveiller S."/>
            <person name="Rouy Z."/>
            <person name="Barbe V."/>
            <person name="Acosta C."/>
            <person name="Cattolico L."/>
            <person name="Jubin C."/>
            <person name="Lajus A."/>
            <person name="Segurens B."/>
            <person name="Vacherie B."/>
            <person name="Wincker P."/>
            <person name="Weissenbach J."/>
            <person name="Lemaitre B."/>
            <person name="Medigue C."/>
            <person name="Boccard F."/>
        </authorList>
    </citation>
    <scope>NUCLEOTIDE SEQUENCE [LARGE SCALE GENOMIC DNA]</scope>
    <source>
        <strain>L48</strain>
    </source>
</reference>